<accession>P78396</accession>
<accession>B7Z7E3</accession>
<accession>Q5T3V0</accession>
<accession>Q5U0G2</accession>
<accession>Q8IY91</accession>
<protein>
    <recommendedName>
        <fullName>Cyclin-A1</fullName>
    </recommendedName>
</protein>
<name>CCNA1_HUMAN</name>
<comment type="function">
    <text evidence="3">May be involved in the control of the cell cycle at the G1/S (start) and G2/M (mitosis) transitions. May primarily function in the control of the germline meiotic cell cycle and additionally in the control of mitotic cell cycle in some somatic cells.</text>
</comment>
<comment type="subunit">
    <text evidence="2 4 5">Interacts with the CDK2 and the CDC2 protein kinases to form a serine/threonine kinase holoenzyme complex. The cyclin subunit imparts substrate specificity to the complex. Does not bind CDK4 and CDK5 (in vitro). The cyclin A1-CDK2 complex interacts with transcription factor E2F-1 and RB proteins. Found in a complex with CDK2, CABLES1 and CCNE1 (By similarity). Interacts with INCA1 (PubMed:15159402, PubMed:21540187). Interacts with KLHDC9 (PubMed:15159402).</text>
</comment>
<comment type="interaction">
    <interactant intactId="EBI-375065">
        <id>P78396</id>
    </interactant>
    <interactant intactId="EBI-375077">
        <id>P38936</id>
        <label>CDKN1A</label>
    </interactant>
    <organismsDiffer>false</organismsDiffer>
    <experiments>8</experiments>
</comment>
<comment type="interaction">
    <interactant intactId="EBI-375065">
        <id>P78396</id>
    </interactant>
    <interactant intactId="EBI-519280">
        <id>P46527</id>
        <label>CDKN1B</label>
    </interactant>
    <organismsDiffer>false</organismsDiffer>
    <experiments>7</experiments>
</comment>
<comment type="interaction">
    <interactant intactId="EBI-21770675">
        <id>P78396-2</id>
    </interactant>
    <interactant intactId="EBI-21251460">
        <id>O60260-5</id>
        <label>PRKN</label>
    </interactant>
    <organismsDiffer>false</organismsDiffer>
    <experiments>3</experiments>
</comment>
<comment type="subcellular location">
    <subcellularLocation>
        <location evidence="1">Nucleus</location>
    </subcellularLocation>
</comment>
<comment type="alternative products">
    <event type="alternative splicing"/>
    <isoform>
        <id>P78396-1</id>
        <name>1</name>
        <sequence type="displayed"/>
    </isoform>
    <isoform>
        <id>P78396-2</id>
        <name>2</name>
        <sequence type="described" ref="VSP_034392"/>
    </isoform>
    <isoform>
        <id>P78396-3</id>
        <name>3</name>
        <sequence type="described" ref="VSP_044257"/>
    </isoform>
</comment>
<comment type="tissue specificity">
    <text evidence="8">Very high levels in testis and very low levels in brain. Also found in myeloid leukemia cell lines.</text>
</comment>
<comment type="developmental stage">
    <text evidence="3">Expression increases in early G1 phase and reaches highest levels during the S and G2/M phases.</text>
</comment>
<comment type="PTM">
    <text evidence="6 7">Polyubiquitinated via 'Lys-11'-linked ubiquitin by the anaphase-promoting complex (APC/C), leading to its degradation by the proteasome (PubMed:21596315). Deubiquitinated and stabilized by USP37 enables entry into S phase (PubMed:21596315). Ubiquitinated during the G1 phase by the SCF(FBXO31) complex, leading to its proteasomal degradation (PubMed:31413110).</text>
</comment>
<comment type="similarity">
    <text evidence="11">Belongs to the cyclin family. Cyclin AB subfamily.</text>
</comment>
<comment type="online information" name="Atlas of Genetics and Cytogenetics in Oncology and Haematology">
    <link uri="https://atlasgeneticsoncology.org/gene/949/CCNA1"/>
</comment>
<feature type="chain" id="PRO_0000080333" description="Cyclin-A1">
    <location>
        <begin position="1"/>
        <end position="465"/>
    </location>
</feature>
<feature type="splice variant" id="VSP_044257" description="In isoform 3." evidence="9">
    <location>
        <begin position="1"/>
        <end position="44"/>
    </location>
</feature>
<feature type="splice variant" id="VSP_034392" description="In isoform 2." evidence="10">
    <location>
        <position position="38"/>
    </location>
</feature>
<feature type="sequence conflict" description="In Ref. 2; AAV38384." evidence="11" ref="2">
    <original>EAMHC</original>
    <variation>SS</variation>
    <location>
        <begin position="43"/>
        <end position="47"/>
    </location>
</feature>
<evidence type="ECO:0000250" key="1">
    <source>
        <dbReference type="UniProtKB" id="P20248"/>
    </source>
</evidence>
<evidence type="ECO:0000250" key="2">
    <source>
        <dbReference type="UniProtKB" id="Q61456"/>
    </source>
</evidence>
<evidence type="ECO:0000269" key="3">
    <source>
    </source>
</evidence>
<evidence type="ECO:0000269" key="4">
    <source>
    </source>
</evidence>
<evidence type="ECO:0000269" key="5">
    <source>
    </source>
</evidence>
<evidence type="ECO:0000269" key="6">
    <source>
    </source>
</evidence>
<evidence type="ECO:0000269" key="7">
    <source>
    </source>
</evidence>
<evidence type="ECO:0000269" key="8">
    <source>
    </source>
</evidence>
<evidence type="ECO:0000303" key="9">
    <source>
    </source>
</evidence>
<evidence type="ECO:0000303" key="10">
    <source>
    </source>
</evidence>
<evidence type="ECO:0000305" key="11"/>
<gene>
    <name type="primary">CCNA1</name>
</gene>
<keyword id="KW-0025">Alternative splicing</keyword>
<keyword id="KW-0131">Cell cycle</keyword>
<keyword id="KW-0132">Cell division</keyword>
<keyword id="KW-0195">Cyclin</keyword>
<keyword id="KW-0498">Mitosis</keyword>
<keyword id="KW-0539">Nucleus</keyword>
<keyword id="KW-1267">Proteomics identification</keyword>
<keyword id="KW-1185">Reference proteome</keyword>
<keyword id="KW-0832">Ubl conjugation</keyword>
<reference key="1">
    <citation type="journal article" date="1997" name="Cancer Res.">
        <title>Characterization of a second human cyclin A that is highly expressed in testis and in several leukemic cell lines.</title>
        <authorList>
            <person name="Yang R."/>
            <person name="Morosetti R."/>
            <person name="Koeffler H.P."/>
        </authorList>
    </citation>
    <scope>NUCLEOTIDE SEQUENCE [MRNA] (ISOFORM 1)</scope>
    <scope>TISSUE SPECIFICITY</scope>
    <source>
        <tissue>Myeloid</tissue>
    </source>
</reference>
<reference key="2">
    <citation type="submission" date="2004-10" db="EMBL/GenBank/DDBJ databases">
        <title>Cloning of human full-length CDSs in BD Creator(TM) system donor vector.</title>
        <authorList>
            <person name="Kalnine N."/>
            <person name="Chen X."/>
            <person name="Rolfs A."/>
            <person name="Halleck A."/>
            <person name="Hines L."/>
            <person name="Eisenstein S."/>
            <person name="Koundinya M."/>
            <person name="Raphael J."/>
            <person name="Moreira D."/>
            <person name="Kelley T."/>
            <person name="LaBaer J."/>
            <person name="Lin Y."/>
            <person name="Phelan M."/>
            <person name="Farmer A."/>
        </authorList>
    </citation>
    <scope>NUCLEOTIDE SEQUENCE [LARGE SCALE MRNA] (ISOFORM 1)</scope>
</reference>
<reference key="3">
    <citation type="journal article" date="2004" name="Nat. Genet.">
        <title>Complete sequencing and characterization of 21,243 full-length human cDNAs.</title>
        <authorList>
            <person name="Ota T."/>
            <person name="Suzuki Y."/>
            <person name="Nishikawa T."/>
            <person name="Otsuki T."/>
            <person name="Sugiyama T."/>
            <person name="Irie R."/>
            <person name="Wakamatsu A."/>
            <person name="Hayashi K."/>
            <person name="Sato H."/>
            <person name="Nagai K."/>
            <person name="Kimura K."/>
            <person name="Makita H."/>
            <person name="Sekine M."/>
            <person name="Obayashi M."/>
            <person name="Nishi T."/>
            <person name="Shibahara T."/>
            <person name="Tanaka T."/>
            <person name="Ishii S."/>
            <person name="Yamamoto J."/>
            <person name="Saito K."/>
            <person name="Kawai Y."/>
            <person name="Isono Y."/>
            <person name="Nakamura Y."/>
            <person name="Nagahari K."/>
            <person name="Murakami K."/>
            <person name="Yasuda T."/>
            <person name="Iwayanagi T."/>
            <person name="Wagatsuma M."/>
            <person name="Shiratori A."/>
            <person name="Sudo H."/>
            <person name="Hosoiri T."/>
            <person name="Kaku Y."/>
            <person name="Kodaira H."/>
            <person name="Kondo H."/>
            <person name="Sugawara M."/>
            <person name="Takahashi M."/>
            <person name="Kanda K."/>
            <person name="Yokoi T."/>
            <person name="Furuya T."/>
            <person name="Kikkawa E."/>
            <person name="Omura Y."/>
            <person name="Abe K."/>
            <person name="Kamihara K."/>
            <person name="Katsuta N."/>
            <person name="Sato K."/>
            <person name="Tanikawa M."/>
            <person name="Yamazaki M."/>
            <person name="Ninomiya K."/>
            <person name="Ishibashi T."/>
            <person name="Yamashita H."/>
            <person name="Murakawa K."/>
            <person name="Fujimori K."/>
            <person name="Tanai H."/>
            <person name="Kimata M."/>
            <person name="Watanabe M."/>
            <person name="Hiraoka S."/>
            <person name="Chiba Y."/>
            <person name="Ishida S."/>
            <person name="Ono Y."/>
            <person name="Takiguchi S."/>
            <person name="Watanabe S."/>
            <person name="Yosida M."/>
            <person name="Hotuta T."/>
            <person name="Kusano J."/>
            <person name="Kanehori K."/>
            <person name="Takahashi-Fujii A."/>
            <person name="Hara H."/>
            <person name="Tanase T.-O."/>
            <person name="Nomura Y."/>
            <person name="Togiya S."/>
            <person name="Komai F."/>
            <person name="Hara R."/>
            <person name="Takeuchi K."/>
            <person name="Arita M."/>
            <person name="Imose N."/>
            <person name="Musashino K."/>
            <person name="Yuuki H."/>
            <person name="Oshima A."/>
            <person name="Sasaki N."/>
            <person name="Aotsuka S."/>
            <person name="Yoshikawa Y."/>
            <person name="Matsunawa H."/>
            <person name="Ichihara T."/>
            <person name="Shiohata N."/>
            <person name="Sano S."/>
            <person name="Moriya S."/>
            <person name="Momiyama H."/>
            <person name="Satoh N."/>
            <person name="Takami S."/>
            <person name="Terashima Y."/>
            <person name="Suzuki O."/>
            <person name="Nakagawa S."/>
            <person name="Senoh A."/>
            <person name="Mizoguchi H."/>
            <person name="Goto Y."/>
            <person name="Shimizu F."/>
            <person name="Wakebe H."/>
            <person name="Hishigaki H."/>
            <person name="Watanabe T."/>
            <person name="Sugiyama A."/>
            <person name="Takemoto M."/>
            <person name="Kawakami B."/>
            <person name="Yamazaki M."/>
            <person name="Watanabe K."/>
            <person name="Kumagai A."/>
            <person name="Itakura S."/>
            <person name="Fukuzumi Y."/>
            <person name="Fujimori Y."/>
            <person name="Komiyama M."/>
            <person name="Tashiro H."/>
            <person name="Tanigami A."/>
            <person name="Fujiwara T."/>
            <person name="Ono T."/>
            <person name="Yamada K."/>
            <person name="Fujii Y."/>
            <person name="Ozaki K."/>
            <person name="Hirao M."/>
            <person name="Ohmori Y."/>
            <person name="Kawabata A."/>
            <person name="Hikiji T."/>
            <person name="Kobatake N."/>
            <person name="Inagaki H."/>
            <person name="Ikema Y."/>
            <person name="Okamoto S."/>
            <person name="Okitani R."/>
            <person name="Kawakami T."/>
            <person name="Noguchi S."/>
            <person name="Itoh T."/>
            <person name="Shigeta K."/>
            <person name="Senba T."/>
            <person name="Matsumura K."/>
            <person name="Nakajima Y."/>
            <person name="Mizuno T."/>
            <person name="Morinaga M."/>
            <person name="Sasaki M."/>
            <person name="Togashi T."/>
            <person name="Oyama M."/>
            <person name="Hata H."/>
            <person name="Watanabe M."/>
            <person name="Komatsu T."/>
            <person name="Mizushima-Sugano J."/>
            <person name="Satoh T."/>
            <person name="Shirai Y."/>
            <person name="Takahashi Y."/>
            <person name="Nakagawa K."/>
            <person name="Okumura K."/>
            <person name="Nagase T."/>
            <person name="Nomura N."/>
            <person name="Kikuchi H."/>
            <person name="Masuho Y."/>
            <person name="Yamashita R."/>
            <person name="Nakai K."/>
            <person name="Yada T."/>
            <person name="Nakamura Y."/>
            <person name="Ohara O."/>
            <person name="Isogai T."/>
            <person name="Sugano S."/>
        </authorList>
    </citation>
    <scope>NUCLEOTIDE SEQUENCE [LARGE SCALE MRNA] (ISOFORM 3)</scope>
    <source>
        <tissue>Testis</tissue>
    </source>
</reference>
<reference key="4">
    <citation type="journal article" date="2004" name="Nature">
        <title>The DNA sequence and analysis of human chromosome 13.</title>
        <authorList>
            <person name="Dunham A."/>
            <person name="Matthews L.H."/>
            <person name="Burton J."/>
            <person name="Ashurst J.L."/>
            <person name="Howe K.L."/>
            <person name="Ashcroft K.J."/>
            <person name="Beare D.M."/>
            <person name="Burford D.C."/>
            <person name="Hunt S.E."/>
            <person name="Griffiths-Jones S."/>
            <person name="Jones M.C."/>
            <person name="Keenan S.J."/>
            <person name="Oliver K."/>
            <person name="Scott C.E."/>
            <person name="Ainscough R."/>
            <person name="Almeida J.P."/>
            <person name="Ambrose K.D."/>
            <person name="Andrews D.T."/>
            <person name="Ashwell R.I.S."/>
            <person name="Babbage A.K."/>
            <person name="Bagguley C.L."/>
            <person name="Bailey J."/>
            <person name="Bannerjee R."/>
            <person name="Barlow K.F."/>
            <person name="Bates K."/>
            <person name="Beasley H."/>
            <person name="Bird C.P."/>
            <person name="Bray-Allen S."/>
            <person name="Brown A.J."/>
            <person name="Brown J.Y."/>
            <person name="Burrill W."/>
            <person name="Carder C."/>
            <person name="Carter N.P."/>
            <person name="Chapman J.C."/>
            <person name="Clamp M.E."/>
            <person name="Clark S.Y."/>
            <person name="Clarke G."/>
            <person name="Clee C.M."/>
            <person name="Clegg S.C."/>
            <person name="Cobley V."/>
            <person name="Collins J.E."/>
            <person name="Corby N."/>
            <person name="Coville G.J."/>
            <person name="Deloukas P."/>
            <person name="Dhami P."/>
            <person name="Dunham I."/>
            <person name="Dunn M."/>
            <person name="Earthrowl M.E."/>
            <person name="Ellington A.G."/>
            <person name="Faulkner L."/>
            <person name="Frankish A.G."/>
            <person name="Frankland J."/>
            <person name="French L."/>
            <person name="Garner P."/>
            <person name="Garnett J."/>
            <person name="Gilbert J.G.R."/>
            <person name="Gilson C.J."/>
            <person name="Ghori J."/>
            <person name="Grafham D.V."/>
            <person name="Gribble S.M."/>
            <person name="Griffiths C."/>
            <person name="Hall R.E."/>
            <person name="Hammond S."/>
            <person name="Harley J.L."/>
            <person name="Hart E.A."/>
            <person name="Heath P.D."/>
            <person name="Howden P.J."/>
            <person name="Huckle E.J."/>
            <person name="Hunt P.J."/>
            <person name="Hunt A.R."/>
            <person name="Johnson C."/>
            <person name="Johnson D."/>
            <person name="Kay M."/>
            <person name="Kimberley A.M."/>
            <person name="King A."/>
            <person name="Laird G.K."/>
            <person name="Langford C.J."/>
            <person name="Lawlor S."/>
            <person name="Leongamornlert D.A."/>
            <person name="Lloyd D.M."/>
            <person name="Lloyd C."/>
            <person name="Loveland J.E."/>
            <person name="Lovell J."/>
            <person name="Martin S."/>
            <person name="Mashreghi-Mohammadi M."/>
            <person name="McLaren S.J."/>
            <person name="McMurray A."/>
            <person name="Milne S."/>
            <person name="Moore M.J.F."/>
            <person name="Nickerson T."/>
            <person name="Palmer S.A."/>
            <person name="Pearce A.V."/>
            <person name="Peck A.I."/>
            <person name="Pelan S."/>
            <person name="Phillimore B."/>
            <person name="Porter K.M."/>
            <person name="Rice C.M."/>
            <person name="Searle S."/>
            <person name="Sehra H.K."/>
            <person name="Shownkeen R."/>
            <person name="Skuce C.D."/>
            <person name="Smith M."/>
            <person name="Steward C.A."/>
            <person name="Sycamore N."/>
            <person name="Tester J."/>
            <person name="Thomas D.W."/>
            <person name="Tracey A."/>
            <person name="Tromans A."/>
            <person name="Tubby B."/>
            <person name="Wall M."/>
            <person name="Wallis J.M."/>
            <person name="West A.P."/>
            <person name="Whitehead S.L."/>
            <person name="Willey D.L."/>
            <person name="Wilming L."/>
            <person name="Wray P.W."/>
            <person name="Wright M.W."/>
            <person name="Young L."/>
            <person name="Coulson A."/>
            <person name="Durbin R.M."/>
            <person name="Hubbard T."/>
            <person name="Sulston J.E."/>
            <person name="Beck S."/>
            <person name="Bentley D.R."/>
            <person name="Rogers J."/>
            <person name="Ross M.T."/>
        </authorList>
    </citation>
    <scope>NUCLEOTIDE SEQUENCE [LARGE SCALE GENOMIC DNA]</scope>
</reference>
<reference key="5">
    <citation type="submission" date="2005-07" db="EMBL/GenBank/DDBJ databases">
        <authorList>
            <person name="Mural R.J."/>
            <person name="Istrail S."/>
            <person name="Sutton G.G."/>
            <person name="Florea L."/>
            <person name="Halpern A.L."/>
            <person name="Mobarry C.M."/>
            <person name="Lippert R."/>
            <person name="Walenz B."/>
            <person name="Shatkay H."/>
            <person name="Dew I."/>
            <person name="Miller J.R."/>
            <person name="Flanigan M.J."/>
            <person name="Edwards N.J."/>
            <person name="Bolanos R."/>
            <person name="Fasulo D."/>
            <person name="Halldorsson B.V."/>
            <person name="Hannenhalli S."/>
            <person name="Turner R."/>
            <person name="Yooseph S."/>
            <person name="Lu F."/>
            <person name="Nusskern D.R."/>
            <person name="Shue B.C."/>
            <person name="Zheng X.H."/>
            <person name="Zhong F."/>
            <person name="Delcher A.L."/>
            <person name="Huson D.H."/>
            <person name="Kravitz S.A."/>
            <person name="Mouchard L."/>
            <person name="Reinert K."/>
            <person name="Remington K.A."/>
            <person name="Clark A.G."/>
            <person name="Waterman M.S."/>
            <person name="Eichler E.E."/>
            <person name="Adams M.D."/>
            <person name="Hunkapiller M.W."/>
            <person name="Myers E.W."/>
            <person name="Venter J.C."/>
        </authorList>
    </citation>
    <scope>NUCLEOTIDE SEQUENCE [LARGE SCALE GENOMIC DNA]</scope>
</reference>
<reference key="6">
    <citation type="journal article" date="2004" name="Genome Res.">
        <title>The status, quality, and expansion of the NIH full-length cDNA project: the Mammalian Gene Collection (MGC).</title>
        <authorList>
            <consortium name="The MGC Project Team"/>
        </authorList>
    </citation>
    <scope>NUCLEOTIDE SEQUENCE [LARGE SCALE MRNA] (ISOFORM 2)</scope>
    <source>
        <tissue>Brain</tissue>
    </source>
</reference>
<reference key="7">
    <citation type="submission" date="1997-06" db="EMBL/GenBank/DDBJ databases">
        <title>The human testes cyclin A1 disrupts growth and DNA damage response of a yeast replication mutant.</title>
        <authorList>
            <person name="Perkins E.L."/>
            <person name="Wood V.J."/>
            <person name="Sterling J.F."/>
            <person name="Hashem V.I."/>
            <person name="Resnick M.A."/>
        </authorList>
    </citation>
    <scope>NUCLEOTIDE SEQUENCE [MRNA] OF 55-465</scope>
    <source>
        <tissue>Testis</tissue>
    </source>
</reference>
<reference key="8">
    <citation type="journal article" date="1999" name="Mol. Cell. Biol.">
        <title>Functions of cyclin A1 in the cell cycle and its interactions with transcription factor E2F-1 and the Rb family of proteins.</title>
        <authorList>
            <person name="Yang R."/>
            <person name="Mueller C."/>
            <person name="Huynh V."/>
            <person name="Fung Y.K."/>
            <person name="Yee A.S."/>
            <person name="Koeffler H.P."/>
        </authorList>
    </citation>
    <scope>FUNCTION</scope>
    <scope>DEVELOPMENTAL STAGE</scope>
</reference>
<reference key="9">
    <citation type="journal article" date="2004" name="J. Biol. Chem.">
        <title>Identification of interaction partners and substrates of the cyclin A1-CDK2 complex.</title>
        <authorList>
            <person name="Diederichs S."/>
            <person name="Baeumer N."/>
            <person name="Ji P."/>
            <person name="Metzelder S.K."/>
            <person name="Idos G.E."/>
            <person name="Cauvet T."/>
            <person name="Wang W."/>
            <person name="Moeller M."/>
            <person name="Pierschalski S."/>
            <person name="Gromoll J."/>
            <person name="Schrader M.G."/>
            <person name="Koeffler H.P."/>
            <person name="Berdel W.E."/>
            <person name="Serve H."/>
            <person name="Mueller-Tidow C."/>
        </authorList>
    </citation>
    <scope>INTERACTION WITH INCA1 AND KLHDC9</scope>
</reference>
<reference key="10">
    <citation type="journal article" date="2011" name="J. Biol. Chem.">
        <title>Inhibitor of cyclin-dependent kinase (CDK) interacting with cyclin A1 (INCA1) regulates proliferation and is repressed by oncogenic signaling.</title>
        <authorList>
            <person name="Baeumer N."/>
            <person name="Tickenbrock L."/>
            <person name="Tschanter P."/>
            <person name="Lohmeyer L."/>
            <person name="Diederichs S."/>
            <person name="Baeumer S."/>
            <person name="Skryabin B.V."/>
            <person name="Zhang F."/>
            <person name="Agrawal-Singh S."/>
            <person name="Koehler G."/>
            <person name="Berdel W.E."/>
            <person name="Serve H."/>
            <person name="Koschmieder S."/>
            <person name="Mueller-Tidow C."/>
        </authorList>
    </citation>
    <scope>INTERACTION WITH INCA1</scope>
</reference>
<reference key="11">
    <citation type="journal article" date="2011" name="Mol. Cell">
        <title>Deubiquitinase USP37 is activated by CDK2 to antagonize APC(CDH1) and promote S phase entry.</title>
        <authorList>
            <person name="Huang X."/>
            <person name="Summers M.K."/>
            <person name="Pham V."/>
            <person name="Lill J.R."/>
            <person name="Liu J."/>
            <person name="Lee G."/>
            <person name="Kirkpatrick D.S."/>
            <person name="Jackson P.K."/>
            <person name="Fang G."/>
            <person name="Dixit V.M."/>
        </authorList>
    </citation>
    <scope>UBIQUITINATION</scope>
    <scope>DEUBIQUITINATION BY USP37</scope>
</reference>
<reference key="12">
    <citation type="journal article" date="2019" name="J. Biol. Chem.">
        <title>The tumor suppressor FBXO31 preserves genomic integrity by regulating DNA replication and segregation through precise control of cyclin A levels.</title>
        <authorList>
            <person name="Dutta P."/>
            <person name="Islam S."/>
            <person name="Choppara S."/>
            <person name="Sengupta P."/>
            <person name="Kumar A."/>
            <person name="Kumar A."/>
            <person name="Wani M.R."/>
            <person name="Chatterjee S."/>
            <person name="Santra M.K."/>
        </authorList>
    </citation>
    <scope>UBIQUITINATION</scope>
</reference>
<dbReference type="EMBL" id="U66838">
    <property type="protein sequence ID" value="AAB49754.1"/>
    <property type="molecule type" value="mRNA"/>
</dbReference>
<dbReference type="EMBL" id="BT019577">
    <property type="protein sequence ID" value="AAV38384.1"/>
    <property type="molecule type" value="mRNA"/>
</dbReference>
<dbReference type="EMBL" id="AK301897">
    <property type="protein sequence ID" value="BAH13579.1"/>
    <property type="molecule type" value="mRNA"/>
</dbReference>
<dbReference type="EMBL" id="AK316392">
    <property type="protein sequence ID" value="BAH14763.1"/>
    <property type="molecule type" value="mRNA"/>
</dbReference>
<dbReference type="EMBL" id="AL359767">
    <property type="status" value="NOT_ANNOTATED_CDS"/>
    <property type="molecule type" value="Genomic_DNA"/>
</dbReference>
<dbReference type="EMBL" id="CH471075">
    <property type="protein sequence ID" value="EAX08565.1"/>
    <property type="molecule type" value="Genomic_DNA"/>
</dbReference>
<dbReference type="EMBL" id="CH471075">
    <property type="protein sequence ID" value="EAX08566.1"/>
    <property type="molecule type" value="Genomic_DNA"/>
</dbReference>
<dbReference type="EMBL" id="BC036346">
    <property type="protein sequence ID" value="AAH36346.1"/>
    <property type="molecule type" value="mRNA"/>
</dbReference>
<dbReference type="EMBL" id="U97680">
    <property type="protein sequence ID" value="AAB60863.1"/>
    <property type="molecule type" value="mRNA"/>
</dbReference>
<dbReference type="CCDS" id="CCDS45031.1">
    <molecule id="P78396-3"/>
</dbReference>
<dbReference type="RefSeq" id="NP_001104515.2">
    <molecule id="P78396-3"/>
    <property type="nucleotide sequence ID" value="NM_001111045.4"/>
</dbReference>
<dbReference type="RefSeq" id="NP_001104516.1">
    <molecule id="P78396-3"/>
    <property type="nucleotide sequence ID" value="NM_001111046.2"/>
</dbReference>
<dbReference type="RefSeq" id="NP_001104517.1">
    <molecule id="P78396-3"/>
    <property type="nucleotide sequence ID" value="NM_001111047.2"/>
</dbReference>
<dbReference type="RefSeq" id="NP_001400852.1">
    <molecule id="P78396-3"/>
    <property type="nucleotide sequence ID" value="NM_001413923.1"/>
</dbReference>
<dbReference type="RefSeq" id="NP_003905.1">
    <property type="nucleotide sequence ID" value="NM_003914.3"/>
</dbReference>
<dbReference type="RefSeq" id="XP_011533596.1">
    <molecule id="P78396-3"/>
    <property type="nucleotide sequence ID" value="XM_011535294.3"/>
</dbReference>
<dbReference type="RefSeq" id="XP_011533597.1">
    <molecule id="P78396-3"/>
    <property type="nucleotide sequence ID" value="XM_011535295.3"/>
</dbReference>
<dbReference type="RefSeq" id="XP_011533598.1">
    <molecule id="P78396-3"/>
    <property type="nucleotide sequence ID" value="XM_011535296.3"/>
</dbReference>
<dbReference type="RefSeq" id="XP_054231129.1">
    <molecule id="P78396-3"/>
    <property type="nucleotide sequence ID" value="XM_054375154.1"/>
</dbReference>
<dbReference type="RefSeq" id="XP_054231130.1">
    <molecule id="P78396-3"/>
    <property type="nucleotide sequence ID" value="XM_054375155.1"/>
</dbReference>
<dbReference type="RefSeq" id="XP_054231131.1">
    <molecule id="P78396-3"/>
    <property type="nucleotide sequence ID" value="XM_054375156.1"/>
</dbReference>
<dbReference type="SMR" id="P78396"/>
<dbReference type="BioGRID" id="114417">
    <property type="interactions" value="62"/>
</dbReference>
<dbReference type="ComplexPortal" id="CPX-2003">
    <property type="entry name" value="Cyclin A1-CDK1 complex"/>
</dbReference>
<dbReference type="ComplexPortal" id="CPX-2005">
    <property type="entry name" value="Cyclin A1-CDK2 complex"/>
</dbReference>
<dbReference type="CORUM" id="P78396"/>
<dbReference type="ELM" id="P78396"/>
<dbReference type="FunCoup" id="P78396">
    <property type="interactions" value="1139"/>
</dbReference>
<dbReference type="IntAct" id="P78396">
    <property type="interactions" value="16"/>
</dbReference>
<dbReference type="MINT" id="P78396"/>
<dbReference type="STRING" id="9606.ENSP00000255465"/>
<dbReference type="BindingDB" id="P78396"/>
<dbReference type="ChEMBL" id="CHEMBL2094128"/>
<dbReference type="ChEMBL" id="CHEMBL3038470"/>
<dbReference type="ChEMBL" id="CHEMBL3885548"/>
<dbReference type="ChEMBL" id="CHEMBL4296066"/>
<dbReference type="iPTMnet" id="P78396"/>
<dbReference type="PhosphoSitePlus" id="P78396"/>
<dbReference type="BioMuta" id="CCNA1"/>
<dbReference type="DMDM" id="8134359"/>
<dbReference type="jPOST" id="P78396"/>
<dbReference type="MassIVE" id="P78396"/>
<dbReference type="PaxDb" id="9606-ENSP00000255465"/>
<dbReference type="PeptideAtlas" id="P78396"/>
<dbReference type="ProteomicsDB" id="57612">
    <molecule id="P78396-1"/>
</dbReference>
<dbReference type="ProteomicsDB" id="57613">
    <molecule id="P78396-2"/>
</dbReference>
<dbReference type="ProteomicsDB" id="6859"/>
<dbReference type="Antibodypedia" id="4520">
    <property type="antibodies" value="536 antibodies from 37 providers"/>
</dbReference>
<dbReference type="DNASU" id="8900"/>
<dbReference type="Ensembl" id="ENST00000255465.8">
    <molecule id="P78396-3"/>
    <property type="protein sequence ID" value="ENSP00000255465.5"/>
    <property type="gene ID" value="ENSG00000133101.10"/>
</dbReference>
<dbReference type="Ensembl" id="ENST00000440264.5">
    <molecule id="P78396-3"/>
    <property type="protein sequence ID" value="ENSP00000400666.1"/>
    <property type="gene ID" value="ENSG00000133101.10"/>
</dbReference>
<dbReference type="Ensembl" id="ENST00000625767.2">
    <molecule id="P78396-3"/>
    <property type="protein sequence ID" value="ENSP00000486017.2"/>
    <property type="gene ID" value="ENSG00000133101.10"/>
</dbReference>
<dbReference type="Ensembl" id="ENST00000630422.2">
    <molecule id="P78396-3"/>
    <property type="protein sequence ID" value="ENSP00000486482.1"/>
    <property type="gene ID" value="ENSG00000133101.10"/>
</dbReference>
<dbReference type="GeneID" id="8900"/>
<dbReference type="KEGG" id="hsa:8900"/>
<dbReference type="MANE-Select" id="ENST00000255465.8">
    <molecule id="P78396-3"/>
    <property type="protein sequence ID" value="ENSP00000255465.5"/>
    <property type="RefSeq nucleotide sequence ID" value="NM_001413923.1"/>
    <property type="RefSeq protein sequence ID" value="NP_001400852.1"/>
</dbReference>
<dbReference type="UCSC" id="uc001uvr.5">
    <molecule id="P78396-1"/>
    <property type="organism name" value="human"/>
</dbReference>
<dbReference type="AGR" id="HGNC:1577"/>
<dbReference type="CTD" id="8900"/>
<dbReference type="DisGeNET" id="8900"/>
<dbReference type="GeneCards" id="CCNA1"/>
<dbReference type="HGNC" id="HGNC:1577">
    <property type="gene designation" value="CCNA1"/>
</dbReference>
<dbReference type="HPA" id="ENSG00000133101">
    <property type="expression patterns" value="Tissue enhanced (parathyroid gland, testis)"/>
</dbReference>
<dbReference type="MIM" id="604036">
    <property type="type" value="gene"/>
</dbReference>
<dbReference type="neXtProt" id="NX_P78396"/>
<dbReference type="OpenTargets" id="ENSG00000133101"/>
<dbReference type="PharmGKB" id="PA26147"/>
<dbReference type="VEuPathDB" id="HostDB:ENSG00000133101"/>
<dbReference type="eggNOG" id="KOG0654">
    <property type="taxonomic scope" value="Eukaryota"/>
</dbReference>
<dbReference type="GeneTree" id="ENSGT00940000157940"/>
<dbReference type="InParanoid" id="P78396"/>
<dbReference type="OMA" id="YKSSKYC"/>
<dbReference type="OrthoDB" id="5590282at2759"/>
<dbReference type="PAN-GO" id="P78396">
    <property type="GO annotations" value="6 GO annotations based on evolutionary models"/>
</dbReference>
<dbReference type="PhylomeDB" id="P78396"/>
<dbReference type="TreeFam" id="TF101002"/>
<dbReference type="PathwayCommons" id="P78396"/>
<dbReference type="Reactome" id="R-HSA-1538133">
    <property type="pathway name" value="G0 and Early G1"/>
</dbReference>
<dbReference type="Reactome" id="R-HSA-170145">
    <property type="pathway name" value="Phosphorylation of proteins involved in the G2/M transition by Cyclin A:Cdc2 complexes"/>
</dbReference>
<dbReference type="Reactome" id="R-HSA-171319">
    <property type="pathway name" value="Telomere Extension By Telomerase"/>
</dbReference>
<dbReference type="Reactome" id="R-HSA-174184">
    <property type="pathway name" value="Cdc20:Phospho-APC/C mediated degradation of Cyclin A"/>
</dbReference>
<dbReference type="Reactome" id="R-HSA-176408">
    <property type="pathway name" value="Regulation of APC/C activators between G1/S and early anaphase"/>
</dbReference>
<dbReference type="Reactome" id="R-HSA-187577">
    <property type="pathway name" value="SCF(Skp2)-mediated degradation of p27/p21"/>
</dbReference>
<dbReference type="Reactome" id="R-HSA-2559582">
    <property type="pathway name" value="Senescence-Associated Secretory Phenotype (SASP)"/>
</dbReference>
<dbReference type="Reactome" id="R-HSA-2559586">
    <property type="pathway name" value="DNA Damage/Telomere Stress Induced Senescence"/>
</dbReference>
<dbReference type="Reactome" id="R-HSA-5689880">
    <property type="pathway name" value="Ub-specific processing proteases"/>
</dbReference>
<dbReference type="Reactome" id="R-HSA-5693607">
    <property type="pathway name" value="Processing of DNA double-strand break ends"/>
</dbReference>
<dbReference type="Reactome" id="R-HSA-6804116">
    <property type="pathway name" value="TP53 Regulates Transcription of Genes Involved in G1 Cell Cycle Arrest"/>
</dbReference>
<dbReference type="Reactome" id="R-HSA-6804756">
    <property type="pathway name" value="Regulation of TP53 Activity through Phosphorylation"/>
</dbReference>
<dbReference type="Reactome" id="R-HSA-6804757">
    <property type="pathway name" value="Regulation of TP53 Degradation"/>
</dbReference>
<dbReference type="Reactome" id="R-HSA-68911">
    <property type="pathway name" value="G2 Phase"/>
</dbReference>
<dbReference type="Reactome" id="R-HSA-68949">
    <property type="pathway name" value="Orc1 removal from chromatin"/>
</dbReference>
<dbReference type="Reactome" id="R-HSA-69017">
    <property type="pathway name" value="CDK-mediated phosphorylation and removal of Cdc6"/>
</dbReference>
<dbReference type="Reactome" id="R-HSA-69205">
    <property type="pathway name" value="G1/S-Specific Transcription"/>
</dbReference>
<dbReference type="Reactome" id="R-HSA-69273">
    <property type="pathway name" value="Cyclin A/B1/B2 associated events during G2/M transition"/>
</dbReference>
<dbReference type="Reactome" id="R-HSA-69563">
    <property type="pathway name" value="p53-Dependent G1 DNA Damage Response"/>
</dbReference>
<dbReference type="Reactome" id="R-HSA-69656">
    <property type="pathway name" value="Cyclin A:Cdk2-associated events at S phase entry"/>
</dbReference>
<dbReference type="SignaLink" id="P78396"/>
<dbReference type="SIGNOR" id="P78396"/>
<dbReference type="BioGRID-ORCS" id="8900">
    <property type="hits" value="11 hits in 1156 CRISPR screens"/>
</dbReference>
<dbReference type="CD-CODE" id="8C2F96ED">
    <property type="entry name" value="Centrosome"/>
</dbReference>
<dbReference type="ChiTaRS" id="CCNA1">
    <property type="organism name" value="human"/>
</dbReference>
<dbReference type="GeneWiki" id="Cyclin_A1"/>
<dbReference type="GenomeRNAi" id="8900"/>
<dbReference type="Pharos" id="P78396">
    <property type="development level" value="Tbio"/>
</dbReference>
<dbReference type="PRO" id="PR:P78396"/>
<dbReference type="Proteomes" id="UP000005640">
    <property type="component" value="Chromosome 13"/>
</dbReference>
<dbReference type="RNAct" id="P78396">
    <property type="molecule type" value="protein"/>
</dbReference>
<dbReference type="Bgee" id="ENSG00000133101">
    <property type="expression patterns" value="Expressed in sperm and 119 other cell types or tissues"/>
</dbReference>
<dbReference type="ExpressionAtlas" id="P78396">
    <property type="expression patterns" value="baseline and differential"/>
</dbReference>
<dbReference type="GO" id="GO:0097121">
    <property type="term" value="C:cyclin A1-CDK1 complex"/>
    <property type="evidence" value="ECO:0000303"/>
    <property type="project" value="ComplexPortal"/>
</dbReference>
<dbReference type="GO" id="GO:0097123">
    <property type="term" value="C:cyclin A1-CDK2 complex"/>
    <property type="evidence" value="ECO:0000303"/>
    <property type="project" value="ComplexPortal"/>
</dbReference>
<dbReference type="GO" id="GO:0097124">
    <property type="term" value="C:cyclin A2-CDK2 complex"/>
    <property type="evidence" value="ECO:0000318"/>
    <property type="project" value="GO_Central"/>
</dbReference>
<dbReference type="GO" id="GO:0005737">
    <property type="term" value="C:cytoplasm"/>
    <property type="evidence" value="ECO:0000318"/>
    <property type="project" value="GO_Central"/>
</dbReference>
<dbReference type="GO" id="GO:0005829">
    <property type="term" value="C:cytosol"/>
    <property type="evidence" value="ECO:0000304"/>
    <property type="project" value="ProtInc"/>
</dbReference>
<dbReference type="GO" id="GO:0015630">
    <property type="term" value="C:microtubule cytoskeleton"/>
    <property type="evidence" value="ECO:0000314"/>
    <property type="project" value="LIFEdb"/>
</dbReference>
<dbReference type="GO" id="GO:0005815">
    <property type="term" value="C:microtubule organizing center"/>
    <property type="evidence" value="ECO:0000318"/>
    <property type="project" value="GO_Central"/>
</dbReference>
<dbReference type="GO" id="GO:0005654">
    <property type="term" value="C:nucleoplasm"/>
    <property type="evidence" value="ECO:0000304"/>
    <property type="project" value="Reactome"/>
</dbReference>
<dbReference type="GO" id="GO:0005634">
    <property type="term" value="C:nucleus"/>
    <property type="evidence" value="ECO:0000318"/>
    <property type="project" value="GO_Central"/>
</dbReference>
<dbReference type="GO" id="GO:0016538">
    <property type="term" value="F:cyclin-dependent protein serine/threonine kinase regulator activity"/>
    <property type="evidence" value="ECO:0000318"/>
    <property type="project" value="GO_Central"/>
</dbReference>
<dbReference type="GO" id="GO:0051301">
    <property type="term" value="P:cell division"/>
    <property type="evidence" value="ECO:0007669"/>
    <property type="project" value="UniProtKB-KW"/>
</dbReference>
<dbReference type="GO" id="GO:0000082">
    <property type="term" value="P:G1/S transition of mitotic cell cycle"/>
    <property type="evidence" value="ECO:0000318"/>
    <property type="project" value="GO_Central"/>
</dbReference>
<dbReference type="GO" id="GO:0007141">
    <property type="term" value="P:male meiosis I"/>
    <property type="evidence" value="ECO:0000304"/>
    <property type="project" value="ProtInc"/>
</dbReference>
<dbReference type="GO" id="GO:0007283">
    <property type="term" value="P:spermatogenesis"/>
    <property type="evidence" value="ECO:0000304"/>
    <property type="project" value="ProtInc"/>
</dbReference>
<dbReference type="CDD" id="cd20560">
    <property type="entry name" value="CYCLIN_CCNA1_rpt1"/>
    <property type="match status" value="1"/>
</dbReference>
<dbReference type="CDD" id="cd20563">
    <property type="entry name" value="CYCLIN_CCNA1_rpt2"/>
    <property type="match status" value="1"/>
</dbReference>
<dbReference type="FunFam" id="1.10.472.10:FF:000001">
    <property type="entry name" value="G2/mitotic-specific cyclin"/>
    <property type="match status" value="1"/>
</dbReference>
<dbReference type="Gene3D" id="1.10.472.10">
    <property type="entry name" value="Cyclin-like"/>
    <property type="match status" value="2"/>
</dbReference>
<dbReference type="InterPro" id="IPR039361">
    <property type="entry name" value="Cyclin"/>
</dbReference>
<dbReference type="InterPro" id="IPR032447">
    <property type="entry name" value="Cyclin-A_N"/>
</dbReference>
<dbReference type="InterPro" id="IPR013763">
    <property type="entry name" value="Cyclin-like_dom"/>
</dbReference>
<dbReference type="InterPro" id="IPR036915">
    <property type="entry name" value="Cyclin-like_sf"/>
</dbReference>
<dbReference type="InterPro" id="IPR004367">
    <property type="entry name" value="Cyclin_C-dom"/>
</dbReference>
<dbReference type="InterPro" id="IPR006671">
    <property type="entry name" value="Cyclin_N"/>
</dbReference>
<dbReference type="InterPro" id="IPR048258">
    <property type="entry name" value="Cyclins_cyclin-box"/>
</dbReference>
<dbReference type="PANTHER" id="PTHR10177">
    <property type="entry name" value="CYCLINS"/>
    <property type="match status" value="1"/>
</dbReference>
<dbReference type="Pfam" id="PF02984">
    <property type="entry name" value="Cyclin_C"/>
    <property type="match status" value="1"/>
</dbReference>
<dbReference type="Pfam" id="PF00134">
    <property type="entry name" value="Cyclin_N"/>
    <property type="match status" value="1"/>
</dbReference>
<dbReference type="Pfam" id="PF16500">
    <property type="entry name" value="Cyclin_N2"/>
    <property type="match status" value="1"/>
</dbReference>
<dbReference type="SMART" id="SM00385">
    <property type="entry name" value="CYCLIN"/>
    <property type="match status" value="2"/>
</dbReference>
<dbReference type="SMART" id="SM01332">
    <property type="entry name" value="Cyclin_C"/>
    <property type="match status" value="1"/>
</dbReference>
<dbReference type="SUPFAM" id="SSF47954">
    <property type="entry name" value="Cyclin-like"/>
    <property type="match status" value="2"/>
</dbReference>
<dbReference type="PROSITE" id="PS00292">
    <property type="entry name" value="CYCLINS"/>
    <property type="match status" value="1"/>
</dbReference>
<organism>
    <name type="scientific">Homo sapiens</name>
    <name type="common">Human</name>
    <dbReference type="NCBI Taxonomy" id="9606"/>
    <lineage>
        <taxon>Eukaryota</taxon>
        <taxon>Metazoa</taxon>
        <taxon>Chordata</taxon>
        <taxon>Craniata</taxon>
        <taxon>Vertebrata</taxon>
        <taxon>Euteleostomi</taxon>
        <taxon>Mammalia</taxon>
        <taxon>Eutheria</taxon>
        <taxon>Euarchontoglires</taxon>
        <taxon>Primates</taxon>
        <taxon>Haplorrhini</taxon>
        <taxon>Catarrhini</taxon>
        <taxon>Hominidae</taxon>
        <taxon>Homo</taxon>
    </lineage>
</organism>
<proteinExistence type="evidence at protein level"/>
<sequence length="465" mass="52358">METGFPAIMYPGSFIGGWGEEYLSWEGPGLPDFVFQQQPVESEAMHCSNPKSGVVLATVARGPDACQILTRAPLGQDPPQRTVLGLLTANGQYRRTCGQGITRIRCYSGSENAFPPAGKKALPDCGVQEPPKQGFDIYMDELEQGDRDSCSVREGMAFEDVYEVDTGTLKSDLHFLLDFNTVSPMLVDSSLLSQSEDISSLGTDVINVTEYAEEIYQYLREAEIRHRPKAHYMKKQPDITEGMRTILVDWLVEVGEEYKLRAETLYLAVNFLDRFLSCMSVLRGKLQLVGTAAMLLASKYEEIYPPEVDEFVYITDDTYTKRQLLKMEHLLLKVLAFDLTVPTTNQFLLQYLRRQGVCVRTENLAKYVAELSLLEADPFLKYLPSLIAAAAFCLANYTVNKHFWPETLAAFTGYSLSEIVPCLSELHKAYLDIPHRPQQAIREKYKASKYLCVSLMEPPAVLLLQ</sequence>